<reference key="1">
    <citation type="journal article" date="1997" name="DNA Res.">
        <title>Structural analysis of Arabidopsis thaliana chromosome 5. II. Sequence features of the regions of 1,044,062 bp covered by thirteen physically assigned P1 clones.</title>
        <authorList>
            <person name="Kotani H."/>
            <person name="Nakamura Y."/>
            <person name="Sato S."/>
            <person name="Kaneko T."/>
            <person name="Asamizu E."/>
            <person name="Miyajima N."/>
            <person name="Tabata S."/>
        </authorList>
    </citation>
    <scope>NUCLEOTIDE SEQUENCE [LARGE SCALE GENOMIC DNA]</scope>
    <source>
        <strain>cv. Columbia</strain>
    </source>
</reference>
<reference key="2">
    <citation type="journal article" date="2017" name="Plant J.">
        <title>Araport11: a complete reannotation of the Arabidopsis thaliana reference genome.</title>
        <authorList>
            <person name="Cheng C.Y."/>
            <person name="Krishnakumar V."/>
            <person name="Chan A.P."/>
            <person name="Thibaud-Nissen F."/>
            <person name="Schobel S."/>
            <person name="Town C.D."/>
        </authorList>
    </citation>
    <scope>GENOME REANNOTATION</scope>
    <source>
        <strain>cv. Columbia</strain>
    </source>
</reference>
<sequence length="443" mass="50902">MSTKRGVTSQDSISLLPDDLLCRILSNLPTKVAVRTSVLSKRWKRFSLSVPLLEFNVSEFHGYYEFARVVHGFLDTSRETCIHKLKLAFEKKQHDRSYLTQWIHNAVKRKVQHLDIGRWSYLGQELIPHSLYTCETLVSLRLHNVSLPDFDHVSLPRLKTMHLIDNIYPNDALLENLISSCPVLEDLNVSRDVENIVKVLRVRSLSLKSLILALDGDRYGDIEDDSWEVVIDAPRLSYLSLRDDQSKSFVLSSVTSPAKVDIDVTFDVVRSVLKNFLLTRSVVRNFFTRLSSVRDMTMSGTTLKVLSRYMRHEPLPQFPNMIQFYAVFCNSDLEKLPNFLESCPNLKSLVLELEVFKKNDLLILSSSIPKCLRSSLEHVEIHTPISGAEAEMKLVKYFLENSAVLKKFTLQLGCKRMDEESIIFKELLRFRRCSASCEVVVEV</sequence>
<feature type="chain" id="PRO_0000283124" description="Putative F-box/FBD/LRR-repeat protein At5g22670">
    <location>
        <begin position="1"/>
        <end position="443"/>
    </location>
</feature>
<feature type="domain" description="F-box" evidence="1">
    <location>
        <begin position="10"/>
        <end position="56"/>
    </location>
</feature>
<feature type="repeat" description="LRR 1">
    <location>
        <begin position="139"/>
        <end position="165"/>
    </location>
</feature>
<feature type="repeat" description="LRR 2">
    <location>
        <begin position="166"/>
        <end position="191"/>
    </location>
</feature>
<feature type="repeat" description="LRR 3">
    <location>
        <begin position="219"/>
        <end position="243"/>
    </location>
</feature>
<feature type="repeat" description="LRR 4">
    <location>
        <begin position="275"/>
        <end position="300"/>
    </location>
</feature>
<feature type="repeat" description="LRR 5">
    <location>
        <begin position="325"/>
        <end position="353"/>
    </location>
</feature>
<feature type="domain" description="FBD">
    <location>
        <begin position="361"/>
        <end position="412"/>
    </location>
</feature>
<keyword id="KW-0433">Leucine-rich repeat</keyword>
<keyword id="KW-1185">Reference proteome</keyword>
<keyword id="KW-0677">Repeat</keyword>
<proteinExistence type="predicted"/>
<name>FDL32_ARATH</name>
<dbReference type="EMBL" id="AB006699">
    <property type="protein sequence ID" value="BAB11673.1"/>
    <property type="molecule type" value="Genomic_DNA"/>
</dbReference>
<dbReference type="EMBL" id="CP002688">
    <property type="protein sequence ID" value="AED93062.1"/>
    <property type="molecule type" value="Genomic_DNA"/>
</dbReference>
<dbReference type="RefSeq" id="NP_197659.1">
    <property type="nucleotide sequence ID" value="NM_122173.1"/>
</dbReference>
<dbReference type="FunCoup" id="Q9FNJ4">
    <property type="interactions" value="5"/>
</dbReference>
<dbReference type="STRING" id="3702.Q9FNJ4"/>
<dbReference type="PaxDb" id="3702-AT5G22670.1"/>
<dbReference type="EnsemblPlants" id="AT5G22670.1">
    <property type="protein sequence ID" value="AT5G22670.1"/>
    <property type="gene ID" value="AT5G22670"/>
</dbReference>
<dbReference type="GeneID" id="832330"/>
<dbReference type="Gramene" id="AT5G22670.1">
    <property type="protein sequence ID" value="AT5G22670.1"/>
    <property type="gene ID" value="AT5G22670"/>
</dbReference>
<dbReference type="KEGG" id="ath:AT5G22670"/>
<dbReference type="Araport" id="AT5G22670"/>
<dbReference type="TAIR" id="AT5G22670"/>
<dbReference type="HOGENOM" id="CLU_010721_1_3_1"/>
<dbReference type="InParanoid" id="Q9FNJ4"/>
<dbReference type="OMA" id="NILQICP"/>
<dbReference type="PhylomeDB" id="Q9FNJ4"/>
<dbReference type="PRO" id="PR:Q9FNJ4"/>
<dbReference type="Proteomes" id="UP000006548">
    <property type="component" value="Chromosome 5"/>
</dbReference>
<dbReference type="ExpressionAtlas" id="Q9FNJ4">
    <property type="expression patterns" value="baseline and differential"/>
</dbReference>
<dbReference type="CDD" id="cd22160">
    <property type="entry name" value="F-box_AtFBL13-like"/>
    <property type="match status" value="1"/>
</dbReference>
<dbReference type="Gene3D" id="1.20.1280.50">
    <property type="match status" value="1"/>
</dbReference>
<dbReference type="Gene3D" id="3.80.10.10">
    <property type="entry name" value="Ribonuclease Inhibitor"/>
    <property type="match status" value="1"/>
</dbReference>
<dbReference type="InterPro" id="IPR036047">
    <property type="entry name" value="F-box-like_dom_sf"/>
</dbReference>
<dbReference type="InterPro" id="IPR053781">
    <property type="entry name" value="F-box_AtFBL13-like"/>
</dbReference>
<dbReference type="InterPro" id="IPR001810">
    <property type="entry name" value="F-box_dom"/>
</dbReference>
<dbReference type="InterPro" id="IPR006566">
    <property type="entry name" value="FBD"/>
</dbReference>
<dbReference type="InterPro" id="IPR050232">
    <property type="entry name" value="FBL13/AtMIF1-like"/>
</dbReference>
<dbReference type="InterPro" id="IPR032675">
    <property type="entry name" value="LRR_dom_sf"/>
</dbReference>
<dbReference type="InterPro" id="IPR055411">
    <property type="entry name" value="LRR_FXL15/At3g58940/PEG3-like"/>
</dbReference>
<dbReference type="PANTHER" id="PTHR31900">
    <property type="entry name" value="F-BOX/RNI SUPERFAMILY PROTEIN-RELATED"/>
    <property type="match status" value="1"/>
</dbReference>
<dbReference type="PANTHER" id="PTHR31900:SF33">
    <property type="entry name" value="PROTEIN WITH RNI-LIKE_FBD-LIKE DOMAIN"/>
    <property type="match status" value="1"/>
</dbReference>
<dbReference type="Pfam" id="PF00646">
    <property type="entry name" value="F-box"/>
    <property type="match status" value="1"/>
</dbReference>
<dbReference type="Pfam" id="PF08387">
    <property type="entry name" value="FBD"/>
    <property type="match status" value="1"/>
</dbReference>
<dbReference type="Pfam" id="PF24758">
    <property type="entry name" value="LRR_At5g56370"/>
    <property type="match status" value="1"/>
</dbReference>
<dbReference type="SMART" id="SM00579">
    <property type="entry name" value="FBD"/>
    <property type="match status" value="1"/>
</dbReference>
<dbReference type="SMART" id="SM00256">
    <property type="entry name" value="FBOX"/>
    <property type="match status" value="1"/>
</dbReference>
<dbReference type="SUPFAM" id="SSF81383">
    <property type="entry name" value="F-box domain"/>
    <property type="match status" value="1"/>
</dbReference>
<dbReference type="SUPFAM" id="SSF52047">
    <property type="entry name" value="RNI-like"/>
    <property type="match status" value="1"/>
</dbReference>
<dbReference type="PROSITE" id="PS50181">
    <property type="entry name" value="FBOX"/>
    <property type="match status" value="1"/>
</dbReference>
<gene>
    <name type="ordered locus">At5g22670</name>
    <name type="ORF">MDJ22.9</name>
</gene>
<accession>Q9FNJ4</accession>
<protein>
    <recommendedName>
        <fullName>Putative F-box/FBD/LRR-repeat protein At5g22670</fullName>
    </recommendedName>
</protein>
<organism>
    <name type="scientific">Arabidopsis thaliana</name>
    <name type="common">Mouse-ear cress</name>
    <dbReference type="NCBI Taxonomy" id="3702"/>
    <lineage>
        <taxon>Eukaryota</taxon>
        <taxon>Viridiplantae</taxon>
        <taxon>Streptophyta</taxon>
        <taxon>Embryophyta</taxon>
        <taxon>Tracheophyta</taxon>
        <taxon>Spermatophyta</taxon>
        <taxon>Magnoliopsida</taxon>
        <taxon>eudicotyledons</taxon>
        <taxon>Gunneridae</taxon>
        <taxon>Pentapetalae</taxon>
        <taxon>rosids</taxon>
        <taxon>malvids</taxon>
        <taxon>Brassicales</taxon>
        <taxon>Brassicaceae</taxon>
        <taxon>Camelineae</taxon>
        <taxon>Arabidopsis</taxon>
    </lineage>
</organism>
<evidence type="ECO:0000255" key="1">
    <source>
        <dbReference type="PROSITE-ProRule" id="PRU00080"/>
    </source>
</evidence>